<proteinExistence type="inferred from homology"/>
<sequence length="611" mass="68077">MKRLPNNPGVYRMFNSDGDVLYVGKARNLKKRVSNYARGIGHSNRITRMIRETVTMEFVVTRTETEALLLEANLIKRSRPRFNVLMRDDKSFPYILLTGGHRAPGIFKHRGARSRKGDYFGPFASAGAVGRTINALQRAFLLRTCTDSVFETRTRPCLLYQIKRCSAPCTYEISDEDYAGLVAEAKAFLSGKSQSVKDHLAAAMQAASADLDFEHAAVYRDRLAALSHVQSHQGINPQTVEEADVFAIHQEGGMTCIQVFFFRTGQNWGNRAYFPKADSSLGPAEVLGAFLSQFYDDKPCPKLVLLSETVEEQSLITEALSTRAGHKVQVSVPQRGEKKELVQHALTNAREALGRRLAETSSQARLLQGLAETFGLPRAPRRIEVYDNSHIMGTNAVGGMIVAGPEGFVKNQYRKFNIRSTDITPGDDFGMMREVIERRFSRLVKEHGTPAGEVENPDAFPAWPDVILIDGGQGQVGAVRQILGEMGISDLVTAIGIAKGVDREAGRERFFMEGKQPFTLPPRDPVLYFIQRLRDEAHRFAIGTHRARRKKEMVRNPLDEIAGIGPTRKRALLHHFGTAKAVSRAAVEDLMQIDGISEAMARAIHDHFRDK</sequence>
<keyword id="KW-0963">Cytoplasm</keyword>
<keyword id="KW-0227">DNA damage</keyword>
<keyword id="KW-0228">DNA excision</keyword>
<keyword id="KW-0234">DNA repair</keyword>
<keyword id="KW-0267">Excision nuclease</keyword>
<keyword id="KW-0742">SOS response</keyword>
<evidence type="ECO:0000255" key="1">
    <source>
        <dbReference type="HAMAP-Rule" id="MF_00203"/>
    </source>
</evidence>
<evidence type="ECO:0000305" key="2"/>
<protein>
    <recommendedName>
        <fullName evidence="1">UvrABC system protein C</fullName>
        <shortName evidence="1">Protein UvrC</shortName>
    </recommendedName>
    <alternativeName>
        <fullName evidence="1">Excinuclease ABC subunit C</fullName>
    </alternativeName>
</protein>
<reference key="1">
    <citation type="journal article" date="2002" name="Proc. Natl. Acad. Sci. U.S.A.">
        <title>The Brucella suis genome reveals fundamental similarities between animal and plant pathogens and symbionts.</title>
        <authorList>
            <person name="Paulsen I.T."/>
            <person name="Seshadri R."/>
            <person name="Nelson K.E."/>
            <person name="Eisen J.A."/>
            <person name="Heidelberg J.F."/>
            <person name="Read T.D."/>
            <person name="Dodson R.J."/>
            <person name="Umayam L.A."/>
            <person name="Brinkac L.M."/>
            <person name="Beanan M.J."/>
            <person name="Daugherty S.C."/>
            <person name="DeBoy R.T."/>
            <person name="Durkin A.S."/>
            <person name="Kolonay J.F."/>
            <person name="Madupu R."/>
            <person name="Nelson W.C."/>
            <person name="Ayodeji B."/>
            <person name="Kraul M."/>
            <person name="Shetty J."/>
            <person name="Malek J.A."/>
            <person name="Van Aken S.E."/>
            <person name="Riedmuller S."/>
            <person name="Tettelin H."/>
            <person name="Gill S.R."/>
            <person name="White O."/>
            <person name="Salzberg S.L."/>
            <person name="Hoover D.L."/>
            <person name="Lindler L.E."/>
            <person name="Halling S.M."/>
            <person name="Boyle S.M."/>
            <person name="Fraser C.M."/>
        </authorList>
    </citation>
    <scope>NUCLEOTIDE SEQUENCE [LARGE SCALE GENOMIC DNA]</scope>
    <source>
        <strain>1330</strain>
    </source>
</reference>
<reference key="2">
    <citation type="journal article" date="2011" name="J. Bacteriol.">
        <title>Revised genome sequence of Brucella suis 1330.</title>
        <authorList>
            <person name="Tae H."/>
            <person name="Shallom S."/>
            <person name="Settlage R."/>
            <person name="Preston D."/>
            <person name="Adams L.G."/>
            <person name="Garner H.R."/>
        </authorList>
    </citation>
    <scope>NUCLEOTIDE SEQUENCE [LARGE SCALE GENOMIC DNA]</scope>
    <source>
        <strain>1330</strain>
    </source>
</reference>
<gene>
    <name evidence="1" type="primary">uvrC</name>
    <name type="ordered locus">BR0699</name>
    <name type="ordered locus">BS1330_I0695</name>
</gene>
<dbReference type="EMBL" id="AE014291">
    <property type="protein sequence ID" value="AAN29628.1"/>
    <property type="molecule type" value="Genomic_DNA"/>
</dbReference>
<dbReference type="EMBL" id="CP002997">
    <property type="protein sequence ID" value="AEM18045.1"/>
    <property type="status" value="ALT_INIT"/>
    <property type="molecule type" value="Genomic_DNA"/>
</dbReference>
<dbReference type="SMR" id="Q8G1L5"/>
<dbReference type="KEGG" id="bms:BR0699"/>
<dbReference type="KEGG" id="bsi:BS1330_I0695"/>
<dbReference type="HOGENOM" id="CLU_014841_3_0_5"/>
<dbReference type="Proteomes" id="UP000007104">
    <property type="component" value="Chromosome I"/>
</dbReference>
<dbReference type="GO" id="GO:0005737">
    <property type="term" value="C:cytoplasm"/>
    <property type="evidence" value="ECO:0007669"/>
    <property type="project" value="UniProtKB-SubCell"/>
</dbReference>
<dbReference type="GO" id="GO:0009380">
    <property type="term" value="C:excinuclease repair complex"/>
    <property type="evidence" value="ECO:0007669"/>
    <property type="project" value="InterPro"/>
</dbReference>
<dbReference type="GO" id="GO:0003677">
    <property type="term" value="F:DNA binding"/>
    <property type="evidence" value="ECO:0007669"/>
    <property type="project" value="UniProtKB-UniRule"/>
</dbReference>
<dbReference type="GO" id="GO:0009381">
    <property type="term" value="F:excinuclease ABC activity"/>
    <property type="evidence" value="ECO:0007669"/>
    <property type="project" value="UniProtKB-UniRule"/>
</dbReference>
<dbReference type="GO" id="GO:0006289">
    <property type="term" value="P:nucleotide-excision repair"/>
    <property type="evidence" value="ECO:0007669"/>
    <property type="project" value="UniProtKB-UniRule"/>
</dbReference>
<dbReference type="GO" id="GO:0009432">
    <property type="term" value="P:SOS response"/>
    <property type="evidence" value="ECO:0007669"/>
    <property type="project" value="UniProtKB-UniRule"/>
</dbReference>
<dbReference type="CDD" id="cd10434">
    <property type="entry name" value="GIY-YIG_UvrC_Cho"/>
    <property type="match status" value="1"/>
</dbReference>
<dbReference type="FunFam" id="3.30.420.340:FF:000001">
    <property type="entry name" value="UvrABC system protein C"/>
    <property type="match status" value="1"/>
</dbReference>
<dbReference type="FunFam" id="3.40.1440.10:FF:000001">
    <property type="entry name" value="UvrABC system protein C"/>
    <property type="match status" value="1"/>
</dbReference>
<dbReference type="Gene3D" id="1.10.150.20">
    <property type="entry name" value="5' to 3' exonuclease, C-terminal subdomain"/>
    <property type="match status" value="1"/>
</dbReference>
<dbReference type="Gene3D" id="3.40.1440.10">
    <property type="entry name" value="GIY-YIG endonuclease"/>
    <property type="match status" value="1"/>
</dbReference>
<dbReference type="Gene3D" id="4.10.860.10">
    <property type="entry name" value="UVR domain"/>
    <property type="match status" value="1"/>
</dbReference>
<dbReference type="Gene3D" id="3.30.420.340">
    <property type="entry name" value="UvrC, RNAse H endonuclease domain"/>
    <property type="match status" value="1"/>
</dbReference>
<dbReference type="HAMAP" id="MF_00203">
    <property type="entry name" value="UvrC"/>
    <property type="match status" value="1"/>
</dbReference>
<dbReference type="InterPro" id="IPR000305">
    <property type="entry name" value="GIY-YIG_endonuc"/>
</dbReference>
<dbReference type="InterPro" id="IPR035901">
    <property type="entry name" value="GIY-YIG_endonuc_sf"/>
</dbReference>
<dbReference type="InterPro" id="IPR047296">
    <property type="entry name" value="GIY-YIG_UvrC_Cho"/>
</dbReference>
<dbReference type="InterPro" id="IPR003583">
    <property type="entry name" value="Hlx-hairpin-Hlx_DNA-bd_motif"/>
</dbReference>
<dbReference type="InterPro" id="IPR010994">
    <property type="entry name" value="RuvA_2-like"/>
</dbReference>
<dbReference type="InterPro" id="IPR001943">
    <property type="entry name" value="UVR_dom"/>
</dbReference>
<dbReference type="InterPro" id="IPR036876">
    <property type="entry name" value="UVR_dom_sf"/>
</dbReference>
<dbReference type="InterPro" id="IPR050066">
    <property type="entry name" value="UvrABC_protein_C"/>
</dbReference>
<dbReference type="InterPro" id="IPR004791">
    <property type="entry name" value="UvrC"/>
</dbReference>
<dbReference type="InterPro" id="IPR001162">
    <property type="entry name" value="UvrC_RNase_H_dom"/>
</dbReference>
<dbReference type="InterPro" id="IPR038476">
    <property type="entry name" value="UvrC_RNase_H_dom_sf"/>
</dbReference>
<dbReference type="NCBIfam" id="NF001824">
    <property type="entry name" value="PRK00558.1-5"/>
    <property type="match status" value="1"/>
</dbReference>
<dbReference type="NCBIfam" id="TIGR00194">
    <property type="entry name" value="uvrC"/>
    <property type="match status" value="1"/>
</dbReference>
<dbReference type="PANTHER" id="PTHR30562:SF1">
    <property type="entry name" value="UVRABC SYSTEM PROTEIN C"/>
    <property type="match status" value="1"/>
</dbReference>
<dbReference type="PANTHER" id="PTHR30562">
    <property type="entry name" value="UVRC/OXIDOREDUCTASE"/>
    <property type="match status" value="1"/>
</dbReference>
<dbReference type="Pfam" id="PF01541">
    <property type="entry name" value="GIY-YIG"/>
    <property type="match status" value="1"/>
</dbReference>
<dbReference type="Pfam" id="PF14520">
    <property type="entry name" value="HHH_5"/>
    <property type="match status" value="1"/>
</dbReference>
<dbReference type="Pfam" id="PF02151">
    <property type="entry name" value="UVR"/>
    <property type="match status" value="1"/>
</dbReference>
<dbReference type="Pfam" id="PF22920">
    <property type="entry name" value="UvrC_RNaseH"/>
    <property type="match status" value="1"/>
</dbReference>
<dbReference type="Pfam" id="PF08459">
    <property type="entry name" value="UvrC_RNaseH_dom"/>
    <property type="match status" value="1"/>
</dbReference>
<dbReference type="SMART" id="SM00465">
    <property type="entry name" value="GIYc"/>
    <property type="match status" value="1"/>
</dbReference>
<dbReference type="SMART" id="SM00278">
    <property type="entry name" value="HhH1"/>
    <property type="match status" value="2"/>
</dbReference>
<dbReference type="SUPFAM" id="SSF46600">
    <property type="entry name" value="C-terminal UvrC-binding domain of UvrB"/>
    <property type="match status" value="1"/>
</dbReference>
<dbReference type="SUPFAM" id="SSF82771">
    <property type="entry name" value="GIY-YIG endonuclease"/>
    <property type="match status" value="1"/>
</dbReference>
<dbReference type="SUPFAM" id="SSF47781">
    <property type="entry name" value="RuvA domain 2-like"/>
    <property type="match status" value="1"/>
</dbReference>
<dbReference type="PROSITE" id="PS50164">
    <property type="entry name" value="GIY_YIG"/>
    <property type="match status" value="1"/>
</dbReference>
<dbReference type="PROSITE" id="PS50151">
    <property type="entry name" value="UVR"/>
    <property type="match status" value="1"/>
</dbReference>
<dbReference type="PROSITE" id="PS50165">
    <property type="entry name" value="UVRC"/>
    <property type="match status" value="1"/>
</dbReference>
<organism>
    <name type="scientific">Brucella suis biovar 1 (strain 1330)</name>
    <dbReference type="NCBI Taxonomy" id="204722"/>
    <lineage>
        <taxon>Bacteria</taxon>
        <taxon>Pseudomonadati</taxon>
        <taxon>Pseudomonadota</taxon>
        <taxon>Alphaproteobacteria</taxon>
        <taxon>Hyphomicrobiales</taxon>
        <taxon>Brucellaceae</taxon>
        <taxon>Brucella/Ochrobactrum group</taxon>
        <taxon>Brucella</taxon>
    </lineage>
</organism>
<comment type="function">
    <text evidence="1">The UvrABC repair system catalyzes the recognition and processing of DNA lesions. UvrC both incises the 5' and 3' sides of the lesion. The N-terminal half is responsible for the 3' incision and the C-terminal half is responsible for the 5' incision.</text>
</comment>
<comment type="subunit">
    <text evidence="1">Interacts with UvrB in an incision complex.</text>
</comment>
<comment type="subcellular location">
    <subcellularLocation>
        <location evidence="1">Cytoplasm</location>
    </subcellularLocation>
</comment>
<comment type="similarity">
    <text evidence="1">Belongs to the UvrC family.</text>
</comment>
<comment type="sequence caution" evidence="2">
    <conflict type="erroneous initiation">
        <sequence resource="EMBL-CDS" id="AEM18045"/>
    </conflict>
    <text>Extended N-terminus.</text>
</comment>
<feature type="chain" id="PRO_0000138291" description="UvrABC system protein C">
    <location>
        <begin position="1"/>
        <end position="611"/>
    </location>
</feature>
<feature type="domain" description="GIY-YIG" evidence="1">
    <location>
        <begin position="6"/>
        <end position="84"/>
    </location>
</feature>
<feature type="domain" description="UVR" evidence="1">
    <location>
        <begin position="194"/>
        <end position="229"/>
    </location>
</feature>
<accession>Q8G1L5</accession>
<accession>G0K8B8</accession>
<name>UVRC_BRUSU</name>